<reference key="1">
    <citation type="journal article" date="2001" name="Nature">
        <title>Complete genome sequence of Salmonella enterica serovar Typhimurium LT2.</title>
        <authorList>
            <person name="McClelland M."/>
            <person name="Sanderson K.E."/>
            <person name="Spieth J."/>
            <person name="Clifton S.W."/>
            <person name="Latreille P."/>
            <person name="Courtney L."/>
            <person name="Porwollik S."/>
            <person name="Ali J."/>
            <person name="Dante M."/>
            <person name="Du F."/>
            <person name="Hou S."/>
            <person name="Layman D."/>
            <person name="Leonard S."/>
            <person name="Nguyen C."/>
            <person name="Scott K."/>
            <person name="Holmes A."/>
            <person name="Grewal N."/>
            <person name="Mulvaney E."/>
            <person name="Ryan E."/>
            <person name="Sun H."/>
            <person name="Florea L."/>
            <person name="Miller W."/>
            <person name="Stoneking T."/>
            <person name="Nhan M."/>
            <person name="Waterston R."/>
            <person name="Wilson R.K."/>
        </authorList>
    </citation>
    <scope>NUCLEOTIDE SEQUENCE [LARGE SCALE GENOMIC DNA]</scope>
    <source>
        <strain>LT2 / SGSC1412 / ATCC 700720</strain>
    </source>
</reference>
<gene>
    <name evidence="1" type="primary">mtlD</name>
    <name type="ordered locus">STM3686</name>
</gene>
<keyword id="KW-0520">NAD</keyword>
<keyword id="KW-0560">Oxidoreductase</keyword>
<keyword id="KW-1185">Reference proteome</keyword>
<sequence length="382" mass="40900">MKALHFGAGNIGRGFIGKLLADAGIQLTFADVNQVVLDALNARHSYQVHVVGENEQVDTVSGVNAVSSIGDDVVDLIAHVDLITTAVGPVVLERIAPAIAKGLVKRKAQGVDAPLNIIACENMVRGTTQLKGHVMNALADGDKAWVEQHVGFVDSAVDRIVPPSASATNDPLEVTVETFSEWIVDKTQFKGALPNIPGMELTDNLMAFVERKLFTLNTGHAITAYLGKLAGHQTIRDAILDESIRAVVKGAMEESGAVLIKRYGFDADKHAAYIQKILGRFENPYLKDDVERVGRQPLRKLSAGDRLIKPLLGTLEYGLPHVNLVKGIAAAMHFRSDEDPQAQELAALITEKGPQAALAQISGLDANSDVVAEAVNAYNATK</sequence>
<organism>
    <name type="scientific">Salmonella typhimurium (strain LT2 / SGSC1412 / ATCC 700720)</name>
    <dbReference type="NCBI Taxonomy" id="99287"/>
    <lineage>
        <taxon>Bacteria</taxon>
        <taxon>Pseudomonadati</taxon>
        <taxon>Pseudomonadota</taxon>
        <taxon>Gammaproteobacteria</taxon>
        <taxon>Enterobacterales</taxon>
        <taxon>Enterobacteriaceae</taxon>
        <taxon>Salmonella</taxon>
    </lineage>
</organism>
<proteinExistence type="inferred from homology"/>
<dbReference type="EC" id="1.1.1.17" evidence="1"/>
<dbReference type="EMBL" id="AE006468">
    <property type="protein sequence ID" value="AAL22545.1"/>
    <property type="molecule type" value="Genomic_DNA"/>
</dbReference>
<dbReference type="RefSeq" id="NP_462586.1">
    <property type="nucleotide sequence ID" value="NC_003197.2"/>
</dbReference>
<dbReference type="RefSeq" id="WP_000645391.1">
    <property type="nucleotide sequence ID" value="NC_003197.2"/>
</dbReference>
<dbReference type="SMR" id="Q8ZL67"/>
<dbReference type="STRING" id="99287.STM3686"/>
<dbReference type="PaxDb" id="99287-STM3686"/>
<dbReference type="GeneID" id="1255210"/>
<dbReference type="KEGG" id="stm:STM3686"/>
<dbReference type="PATRIC" id="fig|99287.12.peg.3899"/>
<dbReference type="HOGENOM" id="CLU_036089_2_0_6"/>
<dbReference type="PhylomeDB" id="Q8ZL67"/>
<dbReference type="BioCyc" id="SENT99287:STM3686-MONOMER"/>
<dbReference type="Proteomes" id="UP000001014">
    <property type="component" value="Chromosome"/>
</dbReference>
<dbReference type="GO" id="GO:0005829">
    <property type="term" value="C:cytosol"/>
    <property type="evidence" value="ECO:0000318"/>
    <property type="project" value="GO_Central"/>
</dbReference>
<dbReference type="GO" id="GO:0008926">
    <property type="term" value="F:mannitol-1-phosphate 5-dehydrogenase activity"/>
    <property type="evidence" value="ECO:0000318"/>
    <property type="project" value="GO_Central"/>
</dbReference>
<dbReference type="GO" id="GO:0019592">
    <property type="term" value="P:mannitol catabolic process"/>
    <property type="evidence" value="ECO:0000318"/>
    <property type="project" value="GO_Central"/>
</dbReference>
<dbReference type="FunFam" id="1.10.1040.10:FF:000009">
    <property type="entry name" value="Mannitol-1-phosphate 5-dehydrogenase"/>
    <property type="match status" value="1"/>
</dbReference>
<dbReference type="FunFam" id="3.40.50.720:FF:000075">
    <property type="entry name" value="Mannitol-1-phosphate 5-dehydrogenase"/>
    <property type="match status" value="1"/>
</dbReference>
<dbReference type="Gene3D" id="1.10.1040.10">
    <property type="entry name" value="N-(1-d-carboxylethyl)-l-norvaline Dehydrogenase, domain 2"/>
    <property type="match status" value="1"/>
</dbReference>
<dbReference type="Gene3D" id="3.40.50.720">
    <property type="entry name" value="NAD(P)-binding Rossmann-like Domain"/>
    <property type="match status" value="1"/>
</dbReference>
<dbReference type="HAMAP" id="MF_00196">
    <property type="entry name" value="Mannitol_dehydrog"/>
    <property type="match status" value="1"/>
</dbReference>
<dbReference type="InterPro" id="IPR008927">
    <property type="entry name" value="6-PGluconate_DH-like_C_sf"/>
</dbReference>
<dbReference type="InterPro" id="IPR013328">
    <property type="entry name" value="6PGD_dom2"/>
</dbReference>
<dbReference type="InterPro" id="IPR023028">
    <property type="entry name" value="Mannitol_1_phos_5_DH"/>
</dbReference>
<dbReference type="InterPro" id="IPR000669">
    <property type="entry name" value="Mannitol_DH"/>
</dbReference>
<dbReference type="InterPro" id="IPR013118">
    <property type="entry name" value="Mannitol_DH_C"/>
</dbReference>
<dbReference type="InterPro" id="IPR023027">
    <property type="entry name" value="Mannitol_DH_CS"/>
</dbReference>
<dbReference type="InterPro" id="IPR013131">
    <property type="entry name" value="Mannitol_DH_N"/>
</dbReference>
<dbReference type="InterPro" id="IPR036291">
    <property type="entry name" value="NAD(P)-bd_dom_sf"/>
</dbReference>
<dbReference type="NCBIfam" id="NF002646">
    <property type="entry name" value="PRK02318.1-2"/>
    <property type="match status" value="1"/>
</dbReference>
<dbReference type="NCBIfam" id="NF002647">
    <property type="entry name" value="PRK02318.1-3"/>
    <property type="match status" value="1"/>
</dbReference>
<dbReference type="NCBIfam" id="NF002648">
    <property type="entry name" value="PRK02318.1-4"/>
    <property type="match status" value="1"/>
</dbReference>
<dbReference type="NCBIfam" id="NF002650">
    <property type="entry name" value="PRK02318.2-2"/>
    <property type="match status" value="1"/>
</dbReference>
<dbReference type="NCBIfam" id="NF002652">
    <property type="entry name" value="PRK02318.2-5"/>
    <property type="match status" value="1"/>
</dbReference>
<dbReference type="PANTHER" id="PTHR30524:SF0">
    <property type="entry name" value="ALTRONATE OXIDOREDUCTASE-RELATED"/>
    <property type="match status" value="1"/>
</dbReference>
<dbReference type="PANTHER" id="PTHR30524">
    <property type="entry name" value="MANNITOL-1-PHOSPHATE 5-DEHYDROGENASE"/>
    <property type="match status" value="1"/>
</dbReference>
<dbReference type="Pfam" id="PF01232">
    <property type="entry name" value="Mannitol_dh"/>
    <property type="match status" value="1"/>
</dbReference>
<dbReference type="Pfam" id="PF08125">
    <property type="entry name" value="Mannitol_dh_C"/>
    <property type="match status" value="1"/>
</dbReference>
<dbReference type="PRINTS" id="PR00084">
    <property type="entry name" value="MTLDHDRGNASE"/>
</dbReference>
<dbReference type="SUPFAM" id="SSF48179">
    <property type="entry name" value="6-phosphogluconate dehydrogenase C-terminal domain-like"/>
    <property type="match status" value="1"/>
</dbReference>
<dbReference type="SUPFAM" id="SSF51735">
    <property type="entry name" value="NAD(P)-binding Rossmann-fold domains"/>
    <property type="match status" value="1"/>
</dbReference>
<dbReference type="PROSITE" id="PS00974">
    <property type="entry name" value="MANNITOL_DHGENASE"/>
    <property type="match status" value="1"/>
</dbReference>
<evidence type="ECO:0000255" key="1">
    <source>
        <dbReference type="HAMAP-Rule" id="MF_00196"/>
    </source>
</evidence>
<feature type="chain" id="PRO_0000170717" description="Mannitol-1-phosphate 5-dehydrogenase">
    <location>
        <begin position="1"/>
        <end position="382"/>
    </location>
</feature>
<feature type="binding site" evidence="1">
    <location>
        <begin position="3"/>
        <end position="14"/>
    </location>
    <ligand>
        <name>NAD(+)</name>
        <dbReference type="ChEBI" id="CHEBI:57540"/>
    </ligand>
</feature>
<name>MTLD_SALTY</name>
<comment type="catalytic activity">
    <reaction evidence="1">
        <text>D-mannitol 1-phosphate + NAD(+) = beta-D-fructose 6-phosphate + NADH + H(+)</text>
        <dbReference type="Rhea" id="RHEA:19661"/>
        <dbReference type="ChEBI" id="CHEBI:15378"/>
        <dbReference type="ChEBI" id="CHEBI:57540"/>
        <dbReference type="ChEBI" id="CHEBI:57634"/>
        <dbReference type="ChEBI" id="CHEBI:57945"/>
        <dbReference type="ChEBI" id="CHEBI:61381"/>
        <dbReference type="EC" id="1.1.1.17"/>
    </reaction>
</comment>
<comment type="similarity">
    <text evidence="1">Belongs to the mannitol dehydrogenase family.</text>
</comment>
<protein>
    <recommendedName>
        <fullName evidence="1">Mannitol-1-phosphate 5-dehydrogenase</fullName>
        <ecNumber evidence="1">1.1.1.17</ecNumber>
    </recommendedName>
</protein>
<accession>Q8ZL67</accession>